<dbReference type="EC" id="2.7.11.1" evidence="10 14"/>
<dbReference type="EMBL" id="M58340">
    <property type="protein sequence ID" value="AAA42104.1"/>
    <property type="molecule type" value="mRNA"/>
</dbReference>
<dbReference type="EMBL" id="M57428">
    <property type="protein sequence ID" value="AAA42103.1"/>
    <property type="molecule type" value="mRNA"/>
</dbReference>
<dbReference type="PIR" id="A36484">
    <property type="entry name" value="TVRTK6"/>
</dbReference>
<dbReference type="RefSeq" id="NP_114191.1">
    <property type="nucleotide sequence ID" value="NM_031985.1"/>
</dbReference>
<dbReference type="SMR" id="P67999"/>
<dbReference type="BioGRID" id="249866">
    <property type="interactions" value="3"/>
</dbReference>
<dbReference type="ELM" id="P67999"/>
<dbReference type="FunCoup" id="P67999">
    <property type="interactions" value="3849"/>
</dbReference>
<dbReference type="IntAct" id="P67999">
    <property type="interactions" value="6"/>
</dbReference>
<dbReference type="MINT" id="P67999"/>
<dbReference type="STRING" id="10116.ENSRNOP00000005226"/>
<dbReference type="GlyGen" id="P67999">
    <property type="glycosylation" value="1 site, 1 O-linked glycan (1 site)"/>
</dbReference>
<dbReference type="iPTMnet" id="P67999"/>
<dbReference type="PhosphoSitePlus" id="P67999"/>
<dbReference type="jPOST" id="P67999"/>
<dbReference type="PaxDb" id="10116-ENSRNOP00000005226"/>
<dbReference type="Ensembl" id="ENSRNOT00000118202.1">
    <molecule id="P67999-1"/>
    <property type="protein sequence ID" value="ENSRNOP00000078345.1"/>
    <property type="gene ID" value="ENSRNOG00000003919.6"/>
</dbReference>
<dbReference type="GeneID" id="83840"/>
<dbReference type="KEGG" id="rno:83840"/>
<dbReference type="AGR" id="RGD:620683"/>
<dbReference type="CTD" id="6198"/>
<dbReference type="RGD" id="620683">
    <property type="gene designation" value="Rps6kb1"/>
</dbReference>
<dbReference type="eggNOG" id="KOG0598">
    <property type="taxonomic scope" value="Eukaryota"/>
</dbReference>
<dbReference type="GeneTree" id="ENSGT00940000154203"/>
<dbReference type="HOGENOM" id="CLU_000288_63_5_1"/>
<dbReference type="InParanoid" id="P67999"/>
<dbReference type="OMA" id="KGSIFAM"/>
<dbReference type="OrthoDB" id="9424at9989"/>
<dbReference type="PhylomeDB" id="P67999"/>
<dbReference type="TreeFam" id="TF313438"/>
<dbReference type="BRENDA" id="2.7.11.1">
    <property type="organism ID" value="5301"/>
</dbReference>
<dbReference type="Reactome" id="R-RNO-166208">
    <property type="pathway name" value="mTORC1-mediated signalling"/>
</dbReference>
<dbReference type="SABIO-RK" id="P67999"/>
<dbReference type="CD-CODE" id="B2E8AD81">
    <property type="entry name" value="Stress granule"/>
</dbReference>
<dbReference type="PRO" id="PR:P67999"/>
<dbReference type="Proteomes" id="UP000002494">
    <property type="component" value="Chromosome 10"/>
</dbReference>
<dbReference type="Bgee" id="ENSRNOG00000003919">
    <property type="expression patterns" value="Expressed in quadriceps femoris and 20 other cell types or tissues"/>
</dbReference>
<dbReference type="GO" id="GO:0009986">
    <property type="term" value="C:cell surface"/>
    <property type="evidence" value="ECO:0000314"/>
    <property type="project" value="RGD"/>
</dbReference>
<dbReference type="GO" id="GO:0005737">
    <property type="term" value="C:cytoplasm"/>
    <property type="evidence" value="ECO:0000266"/>
    <property type="project" value="RGD"/>
</dbReference>
<dbReference type="GO" id="GO:0098978">
    <property type="term" value="C:glutamatergic synapse"/>
    <property type="evidence" value="ECO:0000266"/>
    <property type="project" value="RGD"/>
</dbReference>
<dbReference type="GO" id="GO:0005741">
    <property type="term" value="C:mitochondrial outer membrane"/>
    <property type="evidence" value="ECO:0007669"/>
    <property type="project" value="UniProtKB-SubCell"/>
</dbReference>
<dbReference type="GO" id="GO:0005739">
    <property type="term" value="C:mitochondrion"/>
    <property type="evidence" value="ECO:0000250"/>
    <property type="project" value="UniProtKB"/>
</dbReference>
<dbReference type="GO" id="GO:0043005">
    <property type="term" value="C:neuron projection"/>
    <property type="evidence" value="ECO:0007669"/>
    <property type="project" value="UniProtKB-KW"/>
</dbReference>
<dbReference type="GO" id="GO:0005654">
    <property type="term" value="C:nucleoplasm"/>
    <property type="evidence" value="ECO:0000318"/>
    <property type="project" value="GO_Central"/>
</dbReference>
<dbReference type="GO" id="GO:0048471">
    <property type="term" value="C:perinuclear region of cytoplasm"/>
    <property type="evidence" value="ECO:0000314"/>
    <property type="project" value="RGD"/>
</dbReference>
<dbReference type="GO" id="GO:0098794">
    <property type="term" value="C:postsynapse"/>
    <property type="evidence" value="ECO:0000314"/>
    <property type="project" value="SynGO"/>
</dbReference>
<dbReference type="GO" id="GO:0045202">
    <property type="term" value="C:synapse"/>
    <property type="evidence" value="ECO:0000314"/>
    <property type="project" value="SynGO"/>
</dbReference>
<dbReference type="GO" id="GO:0005524">
    <property type="term" value="F:ATP binding"/>
    <property type="evidence" value="ECO:0000314"/>
    <property type="project" value="RGD"/>
</dbReference>
<dbReference type="GO" id="GO:0042802">
    <property type="term" value="F:identical protein binding"/>
    <property type="evidence" value="ECO:0000353"/>
    <property type="project" value="IntAct"/>
</dbReference>
<dbReference type="GO" id="GO:0030165">
    <property type="term" value="F:PDZ domain binding"/>
    <property type="evidence" value="ECO:0000353"/>
    <property type="project" value="RGD"/>
</dbReference>
<dbReference type="GO" id="GO:0042277">
    <property type="term" value="F:peptide binding"/>
    <property type="evidence" value="ECO:0000314"/>
    <property type="project" value="RGD"/>
</dbReference>
<dbReference type="GO" id="GO:0004672">
    <property type="term" value="F:protein kinase activity"/>
    <property type="evidence" value="ECO:0000314"/>
    <property type="project" value="RGD"/>
</dbReference>
<dbReference type="GO" id="GO:0051721">
    <property type="term" value="F:protein phosphatase 2A binding"/>
    <property type="evidence" value="ECO:0000353"/>
    <property type="project" value="RGD"/>
</dbReference>
<dbReference type="GO" id="GO:0106310">
    <property type="term" value="F:protein serine kinase activity"/>
    <property type="evidence" value="ECO:0007669"/>
    <property type="project" value="RHEA"/>
</dbReference>
<dbReference type="GO" id="GO:0004674">
    <property type="term" value="F:protein serine/threonine kinase activity"/>
    <property type="evidence" value="ECO:0000266"/>
    <property type="project" value="RGD"/>
</dbReference>
<dbReference type="GO" id="GO:0004712">
    <property type="term" value="F:protein serine/threonine/tyrosine kinase activity"/>
    <property type="evidence" value="ECO:0000266"/>
    <property type="project" value="RGD"/>
</dbReference>
<dbReference type="GO" id="GO:0004711">
    <property type="term" value="F:ribosomal protein S6 kinase activity"/>
    <property type="evidence" value="ECO:0000315"/>
    <property type="project" value="RGD"/>
</dbReference>
<dbReference type="GO" id="GO:0006915">
    <property type="term" value="P:apoptotic process"/>
    <property type="evidence" value="ECO:0007669"/>
    <property type="project" value="UniProtKB-KW"/>
</dbReference>
<dbReference type="GO" id="GO:0001662">
    <property type="term" value="P:behavioral fear response"/>
    <property type="evidence" value="ECO:0000266"/>
    <property type="project" value="RGD"/>
</dbReference>
<dbReference type="GO" id="GO:0016477">
    <property type="term" value="P:cell migration"/>
    <property type="evidence" value="ECO:0000270"/>
    <property type="project" value="RGD"/>
</dbReference>
<dbReference type="GO" id="GO:0071549">
    <property type="term" value="P:cellular response to dexamethasone stimulus"/>
    <property type="evidence" value="ECO:0000266"/>
    <property type="project" value="RGD"/>
</dbReference>
<dbReference type="GO" id="GO:0071363">
    <property type="term" value="P:cellular response to growth factor stimulus"/>
    <property type="evidence" value="ECO:0000250"/>
    <property type="project" value="UniProtKB"/>
</dbReference>
<dbReference type="GO" id="GO:0032870">
    <property type="term" value="P:cellular response to hormone stimulus"/>
    <property type="evidence" value="ECO:0000270"/>
    <property type="project" value="RGD"/>
</dbReference>
<dbReference type="GO" id="GO:0032869">
    <property type="term" value="P:cellular response to insulin stimulus"/>
    <property type="evidence" value="ECO:0000266"/>
    <property type="project" value="RGD"/>
</dbReference>
<dbReference type="GO" id="GO:0031670">
    <property type="term" value="P:cellular response to nutrient"/>
    <property type="evidence" value="ECO:0000266"/>
    <property type="project" value="RGD"/>
</dbReference>
<dbReference type="GO" id="GO:0071346">
    <property type="term" value="P:cellular response to type II interferon"/>
    <property type="evidence" value="ECO:0000266"/>
    <property type="project" value="RGD"/>
</dbReference>
<dbReference type="GO" id="GO:0000082">
    <property type="term" value="P:G1/S transition of mitotic cell cycle"/>
    <property type="evidence" value="ECO:0000266"/>
    <property type="project" value="RGD"/>
</dbReference>
<dbReference type="GO" id="GO:0007281">
    <property type="term" value="P:germ cell development"/>
    <property type="evidence" value="ECO:0000266"/>
    <property type="project" value="RGD"/>
</dbReference>
<dbReference type="GO" id="GO:0044539">
    <property type="term" value="P:long-chain fatty acid import into cell"/>
    <property type="evidence" value="ECO:0000250"/>
    <property type="project" value="UniProtKB"/>
</dbReference>
<dbReference type="GO" id="GO:0007616">
    <property type="term" value="P:long-term memory"/>
    <property type="evidence" value="ECO:0000270"/>
    <property type="project" value="RGD"/>
</dbReference>
<dbReference type="GO" id="GO:0050804">
    <property type="term" value="P:modulation of chemical synaptic transmission"/>
    <property type="evidence" value="ECO:0000266"/>
    <property type="project" value="RGD"/>
</dbReference>
<dbReference type="GO" id="GO:0043066">
    <property type="term" value="P:negative regulation of apoptotic process"/>
    <property type="evidence" value="ECO:0000266"/>
    <property type="project" value="RGD"/>
</dbReference>
<dbReference type="GO" id="GO:2001237">
    <property type="term" value="P:negative regulation of extrinsic apoptotic signaling pathway"/>
    <property type="evidence" value="ECO:0000266"/>
    <property type="project" value="RGD"/>
</dbReference>
<dbReference type="GO" id="GO:0046627">
    <property type="term" value="P:negative regulation of insulin receptor signaling pathway"/>
    <property type="evidence" value="ECO:0000315"/>
    <property type="project" value="UniProtKB"/>
</dbReference>
<dbReference type="GO" id="GO:1903940">
    <property type="term" value="P:negative regulation of TORC2 signaling"/>
    <property type="evidence" value="ECO:0000250"/>
    <property type="project" value="UniProtKB"/>
</dbReference>
<dbReference type="GO" id="GO:0018105">
    <property type="term" value="P:peptidyl-serine phosphorylation"/>
    <property type="evidence" value="ECO:0000250"/>
    <property type="project" value="UniProtKB"/>
</dbReference>
<dbReference type="GO" id="GO:0045931">
    <property type="term" value="P:positive regulation of mitotic cell cycle"/>
    <property type="evidence" value="ECO:0000266"/>
    <property type="project" value="RGD"/>
</dbReference>
<dbReference type="GO" id="GO:0048633">
    <property type="term" value="P:positive regulation of skeletal muscle tissue growth"/>
    <property type="evidence" value="ECO:0000315"/>
    <property type="project" value="RGD"/>
</dbReference>
<dbReference type="GO" id="GO:0014911">
    <property type="term" value="P:positive regulation of smooth muscle cell migration"/>
    <property type="evidence" value="ECO:0000315"/>
    <property type="project" value="RGD"/>
</dbReference>
<dbReference type="GO" id="GO:0048661">
    <property type="term" value="P:positive regulation of smooth muscle cell proliferation"/>
    <property type="evidence" value="ECO:0000315"/>
    <property type="project" value="RGD"/>
</dbReference>
<dbReference type="GO" id="GO:1904263">
    <property type="term" value="P:positive regulation of TORC1 signaling"/>
    <property type="evidence" value="ECO:0000266"/>
    <property type="project" value="RGD"/>
</dbReference>
<dbReference type="GO" id="GO:0045727">
    <property type="term" value="P:positive regulation of translation"/>
    <property type="evidence" value="ECO:0000266"/>
    <property type="project" value="RGD"/>
</dbReference>
<dbReference type="GO" id="GO:0045948">
    <property type="term" value="P:positive regulation of translational initiation"/>
    <property type="evidence" value="ECO:0000266"/>
    <property type="project" value="RGD"/>
</dbReference>
<dbReference type="GO" id="GO:0046324">
    <property type="term" value="P:regulation of D-glucose import"/>
    <property type="evidence" value="ECO:0000315"/>
    <property type="project" value="UniProtKB"/>
</dbReference>
<dbReference type="GO" id="GO:0043200">
    <property type="term" value="P:response to amino acid"/>
    <property type="evidence" value="ECO:0000270"/>
    <property type="project" value="RGD"/>
</dbReference>
<dbReference type="GO" id="GO:0014878">
    <property type="term" value="P:response to electrical stimulus involved in regulation of muscle adaptation"/>
    <property type="evidence" value="ECO:0000270"/>
    <property type="project" value="RGD"/>
</dbReference>
<dbReference type="GO" id="GO:0045471">
    <property type="term" value="P:response to ethanol"/>
    <property type="evidence" value="ECO:0000270"/>
    <property type="project" value="RGD"/>
</dbReference>
<dbReference type="GO" id="GO:0033762">
    <property type="term" value="P:response to glucagon"/>
    <property type="evidence" value="ECO:0000270"/>
    <property type="project" value="RGD"/>
</dbReference>
<dbReference type="GO" id="GO:0051384">
    <property type="term" value="P:response to glucocorticoid"/>
    <property type="evidence" value="ECO:0000270"/>
    <property type="project" value="RGD"/>
</dbReference>
<dbReference type="GO" id="GO:0009749">
    <property type="term" value="P:response to glucose"/>
    <property type="evidence" value="ECO:0000270"/>
    <property type="project" value="RGD"/>
</dbReference>
<dbReference type="GO" id="GO:0032868">
    <property type="term" value="P:response to insulin"/>
    <property type="evidence" value="ECO:0000315"/>
    <property type="project" value="UniProtKB"/>
</dbReference>
<dbReference type="GO" id="GO:0043201">
    <property type="term" value="P:response to L-leucine"/>
    <property type="evidence" value="ECO:0000270"/>
    <property type="project" value="RGD"/>
</dbReference>
<dbReference type="GO" id="GO:0032496">
    <property type="term" value="P:response to lipopolysaccharide"/>
    <property type="evidence" value="ECO:0000270"/>
    <property type="project" value="RGD"/>
</dbReference>
<dbReference type="GO" id="GO:0009612">
    <property type="term" value="P:response to mechanical stimulus"/>
    <property type="evidence" value="ECO:0000270"/>
    <property type="project" value="RGD"/>
</dbReference>
<dbReference type="GO" id="GO:1904313">
    <property type="term" value="P:response to methamphetamine hydrochloride"/>
    <property type="evidence" value="ECO:0000270"/>
    <property type="project" value="RGD"/>
</dbReference>
<dbReference type="GO" id="GO:0007584">
    <property type="term" value="P:response to nutrient"/>
    <property type="evidence" value="ECO:0000270"/>
    <property type="project" value="RGD"/>
</dbReference>
<dbReference type="GO" id="GO:0031667">
    <property type="term" value="P:response to nutrient levels"/>
    <property type="evidence" value="ECO:0000266"/>
    <property type="project" value="RGD"/>
</dbReference>
<dbReference type="GO" id="GO:0043434">
    <property type="term" value="P:response to peptide hormone"/>
    <property type="evidence" value="ECO:0000270"/>
    <property type="project" value="RGD"/>
</dbReference>
<dbReference type="GO" id="GO:0033574">
    <property type="term" value="P:response to testosterone"/>
    <property type="evidence" value="ECO:0000270"/>
    <property type="project" value="RGD"/>
</dbReference>
<dbReference type="GO" id="GO:0009636">
    <property type="term" value="P:response to toxic substance"/>
    <property type="evidence" value="ECO:0000270"/>
    <property type="project" value="RGD"/>
</dbReference>
<dbReference type="GO" id="GO:0034612">
    <property type="term" value="P:response to tumor necrosis factor"/>
    <property type="evidence" value="ECO:0000315"/>
    <property type="project" value="UniProtKB"/>
</dbReference>
<dbReference type="GO" id="GO:0009410">
    <property type="term" value="P:response to xenobiotic stimulus"/>
    <property type="evidence" value="ECO:0000270"/>
    <property type="project" value="RGD"/>
</dbReference>
<dbReference type="GO" id="GO:0014732">
    <property type="term" value="P:skeletal muscle atrophy"/>
    <property type="evidence" value="ECO:0000270"/>
    <property type="project" value="RGD"/>
</dbReference>
<dbReference type="GO" id="GO:0003009">
    <property type="term" value="P:skeletal muscle contraction"/>
    <property type="evidence" value="ECO:0000270"/>
    <property type="project" value="RGD"/>
</dbReference>
<dbReference type="GO" id="GO:0031929">
    <property type="term" value="P:TOR signaling"/>
    <property type="evidence" value="ECO:0000250"/>
    <property type="project" value="UniProtKB"/>
</dbReference>
<dbReference type="GO" id="GO:0038202">
    <property type="term" value="P:TORC1 signaling"/>
    <property type="evidence" value="ECO:0000318"/>
    <property type="project" value="GO_Central"/>
</dbReference>
<dbReference type="CDD" id="cd05584">
    <property type="entry name" value="STKc_p70S6K"/>
    <property type="match status" value="1"/>
</dbReference>
<dbReference type="FunFam" id="3.30.200.20:FF:001128">
    <property type="entry name" value="Non-specific serine/threonine protein kinase"/>
    <property type="match status" value="1"/>
</dbReference>
<dbReference type="FunFam" id="1.10.510.10:FF:000092">
    <property type="entry name" value="Ribosomal protein S6 kinase"/>
    <property type="match status" value="1"/>
</dbReference>
<dbReference type="FunFam" id="3.30.200.20:FF:000686">
    <property type="entry name" value="Ribosomal protein S6 kinase"/>
    <property type="match status" value="1"/>
</dbReference>
<dbReference type="Gene3D" id="3.30.200.20">
    <property type="entry name" value="Phosphorylase Kinase, domain 1"/>
    <property type="match status" value="1"/>
</dbReference>
<dbReference type="Gene3D" id="1.10.510.10">
    <property type="entry name" value="Transferase(Phosphotransferase) domain 1"/>
    <property type="match status" value="1"/>
</dbReference>
<dbReference type="InterPro" id="IPR000961">
    <property type="entry name" value="AGC-kinase_C"/>
</dbReference>
<dbReference type="InterPro" id="IPR011009">
    <property type="entry name" value="Kinase-like_dom_sf"/>
</dbReference>
<dbReference type="InterPro" id="IPR017892">
    <property type="entry name" value="Pkinase_C"/>
</dbReference>
<dbReference type="InterPro" id="IPR000719">
    <property type="entry name" value="Prot_kinase_dom"/>
</dbReference>
<dbReference type="InterPro" id="IPR017441">
    <property type="entry name" value="Protein_kinase_ATP_BS"/>
</dbReference>
<dbReference type="InterPro" id="IPR016238">
    <property type="entry name" value="Ribosomal_S6_kinase"/>
</dbReference>
<dbReference type="InterPro" id="IPR008271">
    <property type="entry name" value="Ser/Thr_kinase_AS"/>
</dbReference>
<dbReference type="PANTHER" id="PTHR24351">
    <property type="entry name" value="RIBOSOMAL PROTEIN S6 KINASE"/>
    <property type="match status" value="1"/>
</dbReference>
<dbReference type="Pfam" id="PF00069">
    <property type="entry name" value="Pkinase"/>
    <property type="match status" value="1"/>
</dbReference>
<dbReference type="Pfam" id="PF00433">
    <property type="entry name" value="Pkinase_C"/>
    <property type="match status" value="1"/>
</dbReference>
<dbReference type="PIRSF" id="PIRSF000605">
    <property type="entry name" value="Ribsml_S6_kin_1"/>
    <property type="match status" value="1"/>
</dbReference>
<dbReference type="SMART" id="SM00133">
    <property type="entry name" value="S_TK_X"/>
    <property type="match status" value="1"/>
</dbReference>
<dbReference type="SMART" id="SM00220">
    <property type="entry name" value="S_TKc"/>
    <property type="match status" value="1"/>
</dbReference>
<dbReference type="SUPFAM" id="SSF56112">
    <property type="entry name" value="Protein kinase-like (PK-like)"/>
    <property type="match status" value="1"/>
</dbReference>
<dbReference type="PROSITE" id="PS51285">
    <property type="entry name" value="AGC_KINASE_CTER"/>
    <property type="match status" value="1"/>
</dbReference>
<dbReference type="PROSITE" id="PS00107">
    <property type="entry name" value="PROTEIN_KINASE_ATP"/>
    <property type="match status" value="1"/>
</dbReference>
<dbReference type="PROSITE" id="PS50011">
    <property type="entry name" value="PROTEIN_KINASE_DOM"/>
    <property type="match status" value="1"/>
</dbReference>
<dbReference type="PROSITE" id="PS00108">
    <property type="entry name" value="PROTEIN_KINASE_ST"/>
    <property type="match status" value="1"/>
</dbReference>
<reference key="1">
    <citation type="journal article" date="1990" name="Proc. Natl. Acad. Sci. U.S.A.">
        <title>Molecular structure of a major insulin/mitogen-activated 70-kDa S6 protein kinase.</title>
        <authorList>
            <person name="Banerjee P."/>
            <person name="Ahmad M.F."/>
            <person name="Grove J.R."/>
            <person name="Kozlosky C."/>
            <person name="Price D.J."/>
            <person name="Avruch J."/>
        </authorList>
    </citation>
    <scope>NUCLEOTIDE SEQUENCE [MRNA]</scope>
    <scope>PARTIAL PROTEIN SEQUENCE</scope>
</reference>
<reference key="2">
    <citation type="journal article" date="1990" name="Proc. Natl. Acad. Sci. U.S.A.">
        <title>Cloning of the mitogen-activated S6 kinase from rat liver reveals an enzyme of the second messenger subfamily.</title>
        <authorList>
            <person name="Kozma S.C."/>
            <person name="Ferrari S."/>
            <person name="Bassand P."/>
            <person name="Siegmann M."/>
            <person name="Totty N."/>
            <person name="Thomas G."/>
        </authorList>
    </citation>
    <scope>NUCLEOTIDE SEQUENCE [MRNA] OF 24-525</scope>
    <scope>PARTIAL PROTEIN SEQUENCE</scope>
    <source>
        <strain>Sprague-Dawley</strain>
    </source>
</reference>
<reference key="3">
    <citation type="journal article" date="1995" name="Proc. Natl. Acad. Sci. U.S.A.">
        <title>Structural and functional analysis of pp70S6k.</title>
        <authorList>
            <person name="Cheatham L."/>
            <person name="Monfar M."/>
            <person name="Chou M.M."/>
            <person name="Blenis J."/>
        </authorList>
    </citation>
    <scope>FUNCTION</scope>
    <scope>CATALYTIC ACTIVITY</scope>
    <scope>ACTIVITY REGULATION</scope>
    <scope>MUTAGENESIS OF LYS-123; SER-434; SER-441; THR-444 AND SER-447</scope>
</reference>
<reference key="4">
    <citation type="journal article" date="1998" name="Curr. Biol.">
        <title>3-Phosphoinositide-dependent protein kinase 1 (PDK1) phosphorylates and activates the p70 S6 kinase in vivo and in vitro.</title>
        <authorList>
            <person name="Alessi D.R."/>
            <person name="Kozlowski M.T."/>
            <person name="Weng Q.P."/>
            <person name="Morrice N."/>
            <person name="Avruch J."/>
        </authorList>
    </citation>
    <scope>ACTIVITY REGULATION</scope>
</reference>
<reference key="5">
    <citation type="journal article" date="1998" name="J. Biol. Chem.">
        <title>Regulation of the p70 S6 kinase by phosphorylation in vivo. Analysis using site-specific anti-phosphopeptide antibodies.</title>
        <authorList>
            <person name="Weng Q.P."/>
            <person name="Kozlowski M."/>
            <person name="Belham C."/>
            <person name="Zhang A."/>
            <person name="Comb M.J."/>
            <person name="Avruch J."/>
        </authorList>
    </citation>
    <scope>PHOSPHORYLATION AT THR-252; SER-394; THR-412; SER-434; THR-444 AND SER-447</scope>
    <scope>MUTAGENESIS OF LYS-123; THR-252; THR-256; SER-394 AND THR-412</scope>
</reference>
<reference key="6">
    <citation type="journal article" date="1998" name="Proc. Natl. Acad. Sci. U.S.A.">
        <title>RAFT1 phosphorylation of the translational regulators p70 S6 kinase and 4E-BP1.</title>
        <authorList>
            <person name="Burnett P.E."/>
            <person name="Barrow R.K."/>
            <person name="Cohen N.A."/>
            <person name="Snyder S.H."/>
            <person name="Sabatini D.M."/>
        </authorList>
    </citation>
    <scope>PHOSPHORYLATION AT THR-412 BY MTOR</scope>
</reference>
<reference key="7">
    <citation type="journal article" date="1998" name="Proc. Natl. Acad. Sci. U.S.A.">
        <title>Neurabin is a synaptic protein linking p70 S6 kinase and the neuronal cytoskeleton.</title>
        <authorList>
            <person name="Burnett P.E."/>
            <person name="Blackshaw S."/>
            <person name="Lai M.M."/>
            <person name="Qureshi I.A."/>
            <person name="Burnett A.F."/>
            <person name="Sabatini D.M."/>
            <person name="Snyder S.H."/>
        </authorList>
    </citation>
    <scope>FUNCTION</scope>
    <scope>INTERACTION WITH NEURABIN-I</scope>
    <scope>MUTAGENESIS OF 28-PHE--LEU-32</scope>
</reference>
<reference key="8">
    <citation type="journal article" date="2001" name="Curr. Biol.">
        <title>Identification of the NIMA family kinases NEK6/7 as regulators of the p70 ribosomal S6 kinase.</title>
        <authorList>
            <person name="Belham C."/>
            <person name="Comb M.J."/>
            <person name="Avruch J."/>
        </authorList>
    </citation>
    <scope>PHOSPHORYLATION AT THR-412</scope>
</reference>
<reference key="9">
    <citation type="journal article" date="2002" name="Curr. Biol.">
        <title>Identification of a conserved motif required for mTOR signaling.</title>
        <authorList>
            <person name="Schalm S.S."/>
            <person name="Blenis J."/>
        </authorList>
    </citation>
    <scope>INTERACTION WITH RPTOR</scope>
    <scope>TOS MOTIF</scope>
    <scope>MUTAGENESIS OF PHE-28; ASP-29; ILE-30; ASP-31 AND LEU-32</scope>
</reference>
<reference key="10">
    <citation type="journal article" date="2002" name="J. Biol. Chem.">
        <title>Characterization of phosphatidylinositol 3-kinase-dependent phosphorylation of the hydrophobic motif site Thr(389) in p70 S6 kinase 1.</title>
        <authorList>
            <person name="Romanelli A."/>
            <person name="Dreisbach V.C."/>
            <person name="Blenis J."/>
        </authorList>
    </citation>
    <scope>AUTOPHOSPHORYLATION</scope>
    <scope>CATALYTIC ACTIVITY</scope>
</reference>
<reference key="11">
    <citation type="journal article" date="2003" name="J. Biol. Chem.">
        <title>The mammalian target of rapamycin (mTOR) partner, raptor, binds the mTOR substrates p70 S6 kinase and 4E-BP1 through their TOR signaling (TOS) motif.</title>
        <authorList>
            <person name="Nojima H."/>
            <person name="Tokunaga C."/>
            <person name="Eguchi S."/>
            <person name="Oshiro N."/>
            <person name="Hidayat S."/>
            <person name="Yoshino K."/>
            <person name="Hara K."/>
            <person name="Tanaka N."/>
            <person name="Avruch J."/>
            <person name="Yonezawa K."/>
        </authorList>
    </citation>
    <scope>INTERACTION WITH RPTOR</scope>
    <scope>MUTAGENESIS OF PHE-28</scope>
</reference>
<reference key="12">
    <citation type="journal article" date="2010" name="Biochem. Biophys. Res. Commun.">
        <title>S6K1 is acetylated at lysine 516 in response to growth factor stimulation.</title>
        <authorList>
            <person name="Fenton T.R."/>
            <person name="Gwalter J."/>
            <person name="Cramer R."/>
            <person name="Gout I.T."/>
        </authorList>
    </citation>
    <scope>ACETYLATION AT LYS-516</scope>
</reference>
<reference key="13">
    <citation type="journal article" date="2012" name="Nat. Commun.">
        <title>Quantitative maps of protein phosphorylation sites across 14 different rat organs and tissues.</title>
        <authorList>
            <person name="Lundby A."/>
            <person name="Secher A."/>
            <person name="Lage K."/>
            <person name="Nordsborg N.B."/>
            <person name="Dmytriyev A."/>
            <person name="Lundby C."/>
            <person name="Olsen J.V."/>
        </authorList>
    </citation>
    <scope>PHOSPHORYLATION [LARGE SCALE ANALYSIS] AT SER-447 AND SER-452</scope>
    <scope>IDENTIFICATION BY MASS SPECTROMETRY [LARGE SCALE ANALYSIS]</scope>
</reference>
<reference key="14">
    <citation type="journal article" date="2017" name="Nature">
        <title>EPRS is a critical mTORC1-S6K1 effector that influences adiposity in mice.</title>
        <authorList>
            <person name="Arif A."/>
            <person name="Terenzi F."/>
            <person name="Potdar A.A."/>
            <person name="Jia J."/>
            <person name="Sacks J."/>
            <person name="China A."/>
            <person name="Halawani D."/>
            <person name="Vasu K."/>
            <person name="Li X."/>
            <person name="Brown J.M."/>
            <person name="Chen J."/>
            <person name="Kozma S.C."/>
            <person name="Thomas G."/>
            <person name="Fox P.L."/>
        </authorList>
    </citation>
    <scope>FUNCTION IN PHOSPHORYLATION OF EPRS</scope>
</reference>
<proteinExistence type="evidence at protein level"/>
<organism>
    <name type="scientific">Rattus norvegicus</name>
    <name type="common">Rat</name>
    <dbReference type="NCBI Taxonomy" id="10116"/>
    <lineage>
        <taxon>Eukaryota</taxon>
        <taxon>Metazoa</taxon>
        <taxon>Chordata</taxon>
        <taxon>Craniata</taxon>
        <taxon>Vertebrata</taxon>
        <taxon>Euteleostomi</taxon>
        <taxon>Mammalia</taxon>
        <taxon>Eutheria</taxon>
        <taxon>Euarchontoglires</taxon>
        <taxon>Glires</taxon>
        <taxon>Rodentia</taxon>
        <taxon>Myomorpha</taxon>
        <taxon>Muroidea</taxon>
        <taxon>Muridae</taxon>
        <taxon>Murinae</taxon>
        <taxon>Rattus</taxon>
    </lineage>
</organism>
<protein>
    <recommendedName>
        <fullName>Ribosomal protein S6 kinase beta-1</fullName>
        <shortName>S6K-beta-1</shortName>
        <shortName>S6K1</shortName>
        <ecNumber evidence="10 14">2.7.11.1</ecNumber>
    </recommendedName>
    <alternativeName>
        <fullName>70 kDa ribosomal protein S6 kinase 1</fullName>
        <shortName>P70S6K1</shortName>
        <shortName>p70-S6K 1</shortName>
    </alternativeName>
    <alternativeName>
        <fullName>Ribosomal protein S6 kinase I</fullName>
    </alternativeName>
    <alternativeName>
        <fullName>p70 ribosomal S6 kinase alpha</fullName>
        <shortName>p70 S6 kinase alpha</shortName>
        <shortName>p70 S6K-alpha</shortName>
        <shortName>p70 S6KA</shortName>
    </alternativeName>
</protein>
<feature type="chain" id="PRO_0000024348" description="Ribosomal protein S6 kinase beta-1">
    <location>
        <begin position="1"/>
        <end position="525"/>
    </location>
</feature>
<feature type="domain" description="Protein kinase" evidence="4">
    <location>
        <begin position="91"/>
        <end position="352"/>
    </location>
</feature>
<feature type="domain" description="AGC-kinase C-terminal" evidence="5">
    <location>
        <begin position="353"/>
        <end position="423"/>
    </location>
</feature>
<feature type="region of interest" description="Disordered" evidence="7">
    <location>
        <begin position="28"/>
        <end position="54"/>
    </location>
</feature>
<feature type="region of interest" description="Disordered" evidence="7">
    <location>
        <begin position="380"/>
        <end position="399"/>
    </location>
</feature>
<feature type="region of interest" description="Autoinhibitory domain">
    <location>
        <begin position="424"/>
        <end position="525"/>
    </location>
</feature>
<feature type="region of interest" description="Disordered" evidence="7">
    <location>
        <begin position="486"/>
        <end position="509"/>
    </location>
</feature>
<feature type="short sequence motif" description="TOS motif">
    <location>
        <begin position="28"/>
        <end position="32"/>
    </location>
</feature>
<feature type="compositionally biased region" description="Acidic residues" evidence="7">
    <location>
        <begin position="30"/>
        <end position="46"/>
    </location>
</feature>
<feature type="compositionally biased region" description="Polar residues" evidence="7">
    <location>
        <begin position="381"/>
        <end position="399"/>
    </location>
</feature>
<feature type="active site" description="Proton acceptor" evidence="4 6">
    <location>
        <position position="218"/>
    </location>
</feature>
<feature type="binding site" evidence="4">
    <location>
        <begin position="97"/>
        <end position="105"/>
    </location>
    <ligand>
        <name>ATP</name>
        <dbReference type="ChEBI" id="CHEBI:30616"/>
    </ligand>
</feature>
<feature type="binding site" evidence="4">
    <location>
        <position position="123"/>
    </location>
    <ligand>
        <name>ATP</name>
        <dbReference type="ChEBI" id="CHEBI:30616"/>
    </ligand>
</feature>
<feature type="modified residue" description="Phosphothreonine; by PDPK1" evidence="16">
    <location>
        <position position="252"/>
    </location>
</feature>
<feature type="modified residue" description="Phosphoserine" evidence="16">
    <location>
        <position position="394"/>
    </location>
</feature>
<feature type="modified residue" description="Phosphothreonine; by MTOR, NEK6 and NEK7" evidence="8 15 16">
    <location>
        <position position="412"/>
    </location>
</feature>
<feature type="modified residue" description="Phosphoserine" evidence="16">
    <location>
        <position position="434"/>
    </location>
</feature>
<feature type="modified residue" description="Phosphoserine" evidence="2">
    <location>
        <position position="441"/>
    </location>
</feature>
<feature type="modified residue" description="Phosphothreonine" evidence="16">
    <location>
        <position position="444"/>
    </location>
</feature>
<feature type="modified residue" description="Phosphoserine" evidence="16 19">
    <location>
        <position position="447"/>
    </location>
</feature>
<feature type="modified residue" description="Phosphoserine" evidence="19">
    <location>
        <position position="452"/>
    </location>
</feature>
<feature type="modified residue" description="N6-acetyllysine" evidence="12">
    <location>
        <position position="516"/>
    </location>
</feature>
<feature type="splice variant" id="VSP_018842" description="In isoform Alpha II." evidence="18">
    <location>
        <begin position="1"/>
        <end position="23"/>
    </location>
</feature>
<feature type="mutagenesis site" description="Almost complete loss of activity." evidence="17">
    <location>
        <begin position="28"/>
        <end position="32"/>
    </location>
</feature>
<feature type="mutagenesis site" description="Complete loss of activity. Abolishes interaction with RPTOR. Reduces phosphorylation. Loss of phosphorylation at T-412 and T-444." evidence="9 11">
    <original>F</original>
    <variation>A</variation>
    <location>
        <position position="28"/>
    </location>
</feature>
<feature type="mutagenesis site" description="Almost complete loss of activity; when associated with A-31." evidence="9">
    <original>D</original>
    <variation>A</variation>
    <location>
        <position position="29"/>
    </location>
</feature>
<feature type="mutagenesis site" description="Almost complete loss of activity; when associated with A-32." evidence="9">
    <original>I</original>
    <variation>A</variation>
    <location>
        <position position="30"/>
    </location>
</feature>
<feature type="mutagenesis site" description="Almost complete loss of activity; when associated with A-29." evidence="9">
    <original>D</original>
    <variation>A</variation>
    <location>
        <position position="31"/>
    </location>
</feature>
<feature type="mutagenesis site" description="Almost complete loss of activity; when associated with A-30." evidence="9">
    <original>L</original>
    <variation>A</variation>
    <location>
        <position position="32"/>
    </location>
</feature>
<feature type="mutagenesis site" description="Loss of activity towards ribosomal protein S6." evidence="14 16">
    <original>K</original>
    <variation>M</variation>
    <location>
        <position position="123"/>
    </location>
</feature>
<feature type="mutagenesis site" description="Loss of activity." evidence="14 16">
    <original>K</original>
    <variation>R</variation>
    <location>
        <position position="123"/>
    </location>
</feature>
<feature type="mutagenesis site" description="Loss of activity towards ribosomal protein S6 and reduced phosphorylation at Thr-412." evidence="16">
    <original>T</original>
    <variation>A</variation>
    <location>
        <position position="252"/>
    </location>
</feature>
<feature type="mutagenesis site" description="Loss of activity towards ribosomal protein S6 without effect on phosphorylation status." evidence="16">
    <original>T</original>
    <variation>A</variation>
    <location>
        <position position="256"/>
    </location>
</feature>
<feature type="mutagenesis site" description="Loss of activity towards ribosomal protein S6 and reduces phosphorylation at Thr-252." evidence="16">
    <original>S</original>
    <variation>A</variation>
    <variation>D</variation>
    <location>
        <position position="394"/>
    </location>
</feature>
<feature type="mutagenesis site" description="Loss of activity towards ribosomal protein S6 and loss of phosphorylation at Thr-252." evidence="16">
    <original>T</original>
    <variation>A</variation>
    <location>
        <position position="412"/>
    </location>
</feature>
<feature type="mutagenesis site" description="Mimics phosphorylation. Constitutive active. No effect on activity towards ribosomal protein S6." evidence="16">
    <original>T</original>
    <variation>E</variation>
    <location>
        <position position="412"/>
    </location>
</feature>
<feature type="mutagenesis site" description="No effect on sensitivity to wortmannin and rapamycin; when associated with D-441, D-444 and D-447." evidence="14">
    <original>S</original>
    <variation>D</variation>
    <location>
        <position position="434"/>
    </location>
</feature>
<feature type="mutagenesis site" description="No effect on sensitivity to wortmannin and rapamycin; when associated with D-434, D-D-444 and D-447." evidence="14">
    <original>S</original>
    <variation>D</variation>
    <location>
        <position position="441"/>
    </location>
</feature>
<feature type="mutagenesis site" description="No effect on sensitivity to wortmannin and rapamycin; when associated with D-434, D-441, and D-447." evidence="14">
    <original>T</original>
    <variation>D</variation>
    <location>
        <position position="444"/>
    </location>
</feature>
<feature type="mutagenesis site" description="No effect on sensitivity to wortmannin and rapamycin; when associated with D-434, D-441 and D-444." evidence="14">
    <original>S</original>
    <variation>D</variation>
    <location>
        <position position="447"/>
    </location>
</feature>
<feature type="sequence conflict" description="In Ref. 1; AAA42104." evidence="18" ref="1">
    <original>P</original>
    <variation>R</variation>
    <location>
        <position position="367"/>
    </location>
</feature>
<keyword id="KW-0007">Acetylation</keyword>
<keyword id="KW-0024">Alternative initiation</keyword>
<keyword id="KW-0053">Apoptosis</keyword>
<keyword id="KW-0067">ATP-binding</keyword>
<keyword id="KW-0131">Cell cycle</keyword>
<keyword id="KW-0963">Cytoplasm</keyword>
<keyword id="KW-0903">Direct protein sequencing</keyword>
<keyword id="KW-0418">Kinase</keyword>
<keyword id="KW-0472">Membrane</keyword>
<keyword id="KW-0496">Mitochondrion</keyword>
<keyword id="KW-1000">Mitochondrion outer membrane</keyword>
<keyword id="KW-0547">Nucleotide-binding</keyword>
<keyword id="KW-0597">Phosphoprotein</keyword>
<keyword id="KW-1185">Reference proteome</keyword>
<keyword id="KW-0723">Serine/threonine-protein kinase</keyword>
<keyword id="KW-0770">Synapse</keyword>
<keyword id="KW-0771">Synaptosome</keyword>
<keyword id="KW-0808">Transferase</keyword>
<keyword id="KW-0810">Translation regulation</keyword>
<sequence length="525" mass="59132">MRRRRRRDGFYPAPDFRHREAEDMAGVFDIDLDQPEDAGSEDELEEGGQLNESMDHGGVGPYELGMEHCEKFEISETSVNRGPEKIRPECFELLRVLGKGGYGKVFQVRKVTGANTGKIFAMKVLKKAMIVRNAKDTAHTKAERNILEEVKHPFIVDLIYAFQTGGKLYLILEYLSGGELFMQLEREGIFMEDTACFYLAEISMALGHLHQKGIIYRDLKPENIMLNHQGHVKLTDFGLCKESIHDGTVTHTFCGTIEYMAPEILMRSGHNRAVDWWSLGALMYDMLTGAPPFTGENRKKTIDKILKCKLNLPPYLTQEARDLLKKLLKRNAASRLGAGPGDAGEVQAHPFFRHINWEELLARKVEPPFKPLLQSEEDVSQFDSKFTRQTPVDSPDDSTLSESANQVFLGFTYVAPSVLESVKEKFSFEPKIRSPRRFIGSPRTPVSPVKFSPGDFWGRGASASTANPQTPVEYPMETSGIEQMDVTTSGEASAPLPIRQPNSGPYKKQAFPMISKRPEHLRMNL</sequence>
<name>KS6B1_RAT</name>
<gene>
    <name type="primary">Rps6kb1</name>
</gene>
<accession>P67999</accession>
<accession>P21425</accession>
<comment type="function">
    <text evidence="2 3 13 14 17">Serine/threonine-protein kinase that acts downstream of mTOR signaling in response to growth factors and nutrients to promote cell proliferation, cell growth and cell cycle progression (PubMed:8524831). Regulates protein synthesis through phosphorylation of EIF4B, RPS6 and EEF2K, and contributes to cell survival by repressing the pro-apoptotic function of BAD (By similarity). Under conditions of nutrient depletion, the inactive form associates with the EIF3 translation initiation complex (By similarity). Upon mitogenic stimulation, phosphorylation by the mechanistic target of rapamycin complex 1 (mTORC1) leads to dissociation from the EIF3 complex and activation (By similarity). The active form then phosphorylates and activates several substrates in the pre-initiation complex, including the EIF2B complex and the cap-binding complex component EIF4B (By similarity). Also controls translation initiation by phosphorylating a negative regulator of EIF4A, PDCD4, targeting it for ubiquitination and subsequent proteolysis (By similarity). Promotes initiation of the pioneer round of protein synthesis by phosphorylating POLDIP3/SKAR (By similarity). In response to IGF1, activates translation elongation by phosphorylating EEF2 kinase (EEF2K), which leads to its inhibition and thus activation of EEF2 (By similarity). Also plays a role in feedback regulation of mTORC2 by mTORC1 by phosphorylating MAPKAP1/SIN1, MTOR and RICTOR, resulting in the inhibition of mTORC2 and AKT1 signaling (By similarity). Also involved in feedback regulation of mTORC1 and mTORC2 by phosphorylating DEPTOR (By similarity). Mediates cell survival by phosphorylating the pro-apoptotic protein BAD and suppressing its pro-apoptotic function (By similarity). Phosphorylates mitochondrial URI1 leading to dissociation of a URI1-PPP1CC complex (By similarity). The free mitochondrial PPP1CC can then dephosphorylate RPS6KB1 at Thr-412, which is proposed to be a negative feedback mechanism for the RPS6KB1 anti-apoptotic function (By similarity). Mediates TNF-alpha-induced insulin resistance by phosphorylating IRS1 at multiple serine residues, resulting in accelerated degradation of IRS1 (By similarity). In cells lacking functional TSC1-2 complex, constitutively phosphorylates and inhibits GSK3B (By similarity). May be involved in cytoskeletal rearrangement through binding to neurabin (PubMed:9653190). Phosphorylates and activates the pyrimidine biosynthesis enzyme CAD, downstream of MTOR (By similarity). Following activation by mTORC1, phosphorylates EPRS and thereby plays a key role in fatty acid uptake by adipocytes and also most probably in interferon-gamma-induced translation inhibition (PubMed:28178239).</text>
</comment>
<comment type="catalytic activity">
    <reaction evidence="10 14">
        <text>L-seryl-[protein] + ATP = O-phospho-L-seryl-[protein] + ADP + H(+)</text>
        <dbReference type="Rhea" id="RHEA:17989"/>
        <dbReference type="Rhea" id="RHEA-COMP:9863"/>
        <dbReference type="Rhea" id="RHEA-COMP:11604"/>
        <dbReference type="ChEBI" id="CHEBI:15378"/>
        <dbReference type="ChEBI" id="CHEBI:29999"/>
        <dbReference type="ChEBI" id="CHEBI:30616"/>
        <dbReference type="ChEBI" id="CHEBI:83421"/>
        <dbReference type="ChEBI" id="CHEBI:456216"/>
        <dbReference type="EC" id="2.7.11.1"/>
    </reaction>
</comment>
<comment type="catalytic activity">
    <reaction evidence="10 14">
        <text>L-threonyl-[protein] + ATP = O-phospho-L-threonyl-[protein] + ADP + H(+)</text>
        <dbReference type="Rhea" id="RHEA:46608"/>
        <dbReference type="Rhea" id="RHEA-COMP:11060"/>
        <dbReference type="Rhea" id="RHEA-COMP:11605"/>
        <dbReference type="ChEBI" id="CHEBI:15378"/>
        <dbReference type="ChEBI" id="CHEBI:30013"/>
        <dbReference type="ChEBI" id="CHEBI:30616"/>
        <dbReference type="ChEBI" id="CHEBI:61977"/>
        <dbReference type="ChEBI" id="CHEBI:456216"/>
        <dbReference type="EC" id="2.7.11.1"/>
    </reaction>
</comment>
<comment type="activity regulation">
    <text evidence="1">Activation requires multiple phosphorylation events on serine/threonine residues. Activation appears to be first mediated by phosphorylation of multiple sites in the autoinhibitory domain, which facilitates phosphorylation at Thr-412, disrupting the autoinhibitory mechanism and allowing phosphorylation of Thr-252 by PDPK1. The active conformation of the kinase is believed to be stabilized by a mechanism involving three conserved phosphorylation sites located in the kinase domain activation loop (Thr-252) and in the AGC-kinase C-terminal domain (Ser-394 in the middle of the tail/linker region and Thr-412 within a hydrophobic motif at its end). Activated by mTORC1; isoform Alpha I and isoform Alpha II are sensitive to rapamycin, which inhibits activating phosphorylation at Thr-412. Activated by PDPK1 (By similarity).</text>
</comment>
<comment type="subunit">
    <text evidence="2 9 11 17">Interacts with PPP1R9A/neurabin-1 (PubMed:9653190). Interacts with RPTOR (PubMed:11967149, PubMed:12604610). Interacts with IRS1 (By similarity). Interacts with EIF3B and EIF3C (By similarity). Interacts with POLDIP3 (By similarity). Interacts with TRAF4 (By similarity). Interacts (via N-terminus) with IER5 (By similarity).</text>
</comment>
<comment type="interaction">
    <interactant intactId="EBI-2639458">
        <id>P67999</id>
    </interactant>
    <interactant intactId="EBI-7092421">
        <id>O35867</id>
        <label>Ppp1r9a</label>
    </interactant>
    <organismsDiffer>false</organismsDiffer>
    <experiments>4</experiments>
</comment>
<comment type="interaction">
    <interactant intactId="EBI-2639458">
        <id>P67999</id>
    </interactant>
    <interactant intactId="EBI-2639458">
        <id>P67999</id>
        <label>Rps6kb1</label>
    </interactant>
    <organismsDiffer>false</organismsDiffer>
    <experiments>2</experiments>
</comment>
<comment type="interaction">
    <interactant intactId="EBI-2639458">
        <id>P67999</id>
    </interactant>
    <interactant intactId="EBI-1567928">
        <id>Q8N122</id>
        <label>RPTOR</label>
    </interactant>
    <organismsDiffer>true</organismsDiffer>
    <experiments>2</experiments>
</comment>
<comment type="subcellular location">
    <subcellularLocation>
        <location>Cytoplasm</location>
    </subcellularLocation>
    <subcellularLocation>
        <location>Synapse</location>
        <location>Synaptosome</location>
    </subcellularLocation>
    <subcellularLocation>
        <location>Mitochondrion outer membrane</location>
    </subcellularLocation>
    <subcellularLocation>
        <location evidence="1">Mitochondrion</location>
    </subcellularLocation>
    <text evidence="1">Colocalizes with URI1 at mitochondrion.</text>
</comment>
<comment type="alternative products">
    <event type="alternative initiation"/>
    <isoform>
        <id>P67999-1</id>
        <name>Alpha I</name>
        <sequence type="displayed"/>
    </isoform>
    <isoform>
        <id>P67999-2</id>
        <name>Alpha II</name>
        <sequence type="described" ref="VSP_018842"/>
    </isoform>
</comment>
<comment type="tissue specificity">
    <text>Brain.</text>
</comment>
<comment type="domain">
    <text>The autoinhibitory domain is believed to block phosphorylation within the AGC-kinase C-terminal domain and the activation loop.</text>
</comment>
<comment type="domain">
    <text>The TOS (TOR signaling) motif is essential for activation by mTORC1.</text>
</comment>
<comment type="PTM">
    <text evidence="1 8 15 16">Dephosphorylation by PPP1CC at Thr-412 in mitochondrion (By similarity). Phosphorylation at Thr-412 is regulated by mTORC1. The phosphorylation at this site is maintained by an agonist-dependent autophosphorylation mechanism. Activated by phosphorylation at Thr-252 by PDPK1.</text>
</comment>
<comment type="similarity">
    <text evidence="18">Belongs to the protein kinase superfamily. AGC Ser/Thr protein kinase family. S6 kinase subfamily.</text>
</comment>
<evidence type="ECO:0000250" key="1"/>
<evidence type="ECO:0000250" key="2">
    <source>
        <dbReference type="UniProtKB" id="P23443"/>
    </source>
</evidence>
<evidence type="ECO:0000250" key="3">
    <source>
        <dbReference type="UniProtKB" id="Q8BSK8"/>
    </source>
</evidence>
<evidence type="ECO:0000255" key="4">
    <source>
        <dbReference type="PROSITE-ProRule" id="PRU00159"/>
    </source>
</evidence>
<evidence type="ECO:0000255" key="5">
    <source>
        <dbReference type="PROSITE-ProRule" id="PRU00618"/>
    </source>
</evidence>
<evidence type="ECO:0000255" key="6">
    <source>
        <dbReference type="PROSITE-ProRule" id="PRU10027"/>
    </source>
</evidence>
<evidence type="ECO:0000256" key="7">
    <source>
        <dbReference type="SAM" id="MobiDB-lite"/>
    </source>
</evidence>
<evidence type="ECO:0000269" key="8">
    <source>
    </source>
</evidence>
<evidence type="ECO:0000269" key="9">
    <source>
    </source>
</evidence>
<evidence type="ECO:0000269" key="10">
    <source>
    </source>
</evidence>
<evidence type="ECO:0000269" key="11">
    <source>
    </source>
</evidence>
<evidence type="ECO:0000269" key="12">
    <source>
    </source>
</evidence>
<evidence type="ECO:0000269" key="13">
    <source>
    </source>
</evidence>
<evidence type="ECO:0000269" key="14">
    <source>
    </source>
</evidence>
<evidence type="ECO:0000269" key="15">
    <source>
    </source>
</evidence>
<evidence type="ECO:0000269" key="16">
    <source>
    </source>
</evidence>
<evidence type="ECO:0000269" key="17">
    <source>
    </source>
</evidence>
<evidence type="ECO:0000305" key="18"/>
<evidence type="ECO:0007744" key="19">
    <source>
    </source>
</evidence>